<gene>
    <name type="primary">Eif3e</name>
    <name type="synonym">Eif3s6</name>
    <name type="synonym">Int6</name>
</gene>
<organism>
    <name type="scientific">Rattus norvegicus</name>
    <name type="common">Rat</name>
    <dbReference type="NCBI Taxonomy" id="10116"/>
    <lineage>
        <taxon>Eukaryota</taxon>
        <taxon>Metazoa</taxon>
        <taxon>Chordata</taxon>
        <taxon>Craniata</taxon>
        <taxon>Vertebrata</taxon>
        <taxon>Euteleostomi</taxon>
        <taxon>Mammalia</taxon>
        <taxon>Eutheria</taxon>
        <taxon>Euarchontoglires</taxon>
        <taxon>Glires</taxon>
        <taxon>Rodentia</taxon>
        <taxon>Myomorpha</taxon>
        <taxon>Muroidea</taxon>
        <taxon>Muridae</taxon>
        <taxon>Murinae</taxon>
        <taxon>Rattus</taxon>
    </lineage>
</organism>
<name>EIF3E_RAT</name>
<keyword id="KW-0007">Acetylation</keyword>
<keyword id="KW-0963">Cytoplasm</keyword>
<keyword id="KW-0396">Initiation factor</keyword>
<keyword id="KW-0539">Nucleus</keyword>
<keyword id="KW-0597">Phosphoprotein</keyword>
<keyword id="KW-0648">Protein biosynthesis</keyword>
<keyword id="KW-1185">Reference proteome</keyword>
<reference key="1">
    <citation type="journal article" date="2004" name="Genome Res.">
        <title>The status, quality, and expansion of the NIH full-length cDNA project: the Mammalian Gene Collection (MGC).</title>
        <authorList>
            <consortium name="The MGC Project Team"/>
        </authorList>
    </citation>
    <scope>NUCLEOTIDE SEQUENCE [LARGE SCALE MRNA]</scope>
    <source>
        <tissue>Testis</tissue>
    </source>
</reference>
<comment type="function">
    <text evidence="3">Component of the eukaryotic translation initiation factor 3 (eIF-3) complex, which is required for several steps in the initiation of protein synthesis. The eIF-3 complex associates with the 40S ribosome and facilitates the recruitment of eIF-1, eIF-1A, eIF-2:GTP:methionyl-tRNAi and eIF-5 to form the 43S pre-initiation complex (43S PIC). The eIF-3 complex stimulates mRNA recruitment to the 43S PIC and scanning of the mRNA for AUG recognition. The eIF-3 complex is also required for disassembly and recycling of post-termination ribosomal complexes and subsequently prevents premature joining of the 40S and 60S ribosomal subunits prior to initiation. The eIF-3 complex specifically targets and initiates translation of a subset of mRNAs involved in cell proliferation, including cell cycling, differentiation and apoptosis, and uses different modes of RNA stem-loop binding to exert either translational activation or repression. Required for nonsense-mediated mRNA decay (NMD); may act in conjunction with UPF2 to divert mRNAs from translation to the NMD pathway. May interact with MCM7 and EPAS1 and regulate the proteasome-mediated degradation of these proteins.</text>
</comment>
<comment type="subunit">
    <text evidence="1 3">Component of the eukaryotic translation initiation factor 3 (eIF-3) complex, which is composed of 13 subunits: EIF3A, EIF3B, EIF3C, EIF3D, EIF3E, EIF3F, EIF3G, EIF3H, EIF3I, EIF3J, EIF3K, EIF3L and EIF3M. The eIF-3 complex appears to include 3 stable modules: module A is composed of EIF3A, EIF3B, EIF3G and EIF3I; module B is composed of EIF3F, EIF3H, and EIF3M; and module C is composed of EIF3C, EIF3D, EIF3E, EIF3K and EIF3L. EIF3C of module C binds EIF3B of module A and EIF3H of module B, thereby linking the three modules. EIF3J is a labile subunit that binds to the eIF-3 complex via EIF3B. The eIF-3 complex interacts with RPS6KB1 under conditions of nutrient depletion. Mitogenic stimulation leads to binding and activation of a complex composed of MTOR and RPTOR, leading to phosphorylation and release of RPS6KB1 and binding of EIF4B to eIF-3. Interacts with COPS3, COPS6, COPS7 (COPS7A or COPS7B), EIF4G1, EPAS1, MCM7, NCBP1, PSMC6, TRIM27 and UPF2 (By similarity). Interacts with IFIT1 and IFIT2 (By similarity). Interacts with BZW2/5MP1 (By similarity).</text>
</comment>
<comment type="subcellular location">
    <subcellularLocation>
        <location evidence="3">Cytoplasm</location>
    </subcellularLocation>
    <subcellularLocation>
        <location evidence="3">Nucleus</location>
        <location evidence="3">PML body</location>
    </subcellularLocation>
</comment>
<comment type="similarity">
    <text evidence="3">Belongs to the eIF-3 subunit E family.</text>
</comment>
<feature type="initiator methionine" description="Removed" evidence="3">
    <location>
        <position position="1"/>
    </location>
</feature>
<feature type="chain" id="PRO_0000291873" description="Eukaryotic translation initiation factor 3 subunit E">
    <location>
        <begin position="2"/>
        <end position="445"/>
    </location>
</feature>
<feature type="domain" description="PCI" evidence="4">
    <location>
        <begin position="221"/>
        <end position="398"/>
    </location>
</feature>
<feature type="region of interest" description="Sufficient for interaction with EPAS1" evidence="3">
    <location>
        <begin position="4"/>
        <end position="128"/>
    </location>
</feature>
<feature type="region of interest" description="Sufficient for interaction with TRIM27" evidence="3">
    <location>
        <begin position="9"/>
        <end position="195"/>
    </location>
</feature>
<feature type="region of interest" description="Sufficient for interaction with MCM7" evidence="3">
    <location>
        <begin position="351"/>
        <end position="445"/>
    </location>
</feature>
<feature type="modified residue" description="N-acetylalanine" evidence="1 3">
    <location>
        <position position="2"/>
    </location>
</feature>
<feature type="modified residue" description="Phosphoserine" evidence="1">
    <location>
        <position position="399"/>
    </location>
</feature>
<feature type="modified residue" description="Phosphothreonine" evidence="2">
    <location>
        <position position="439"/>
    </location>
</feature>
<feature type="modified residue" description="Phosphoserine" evidence="1">
    <location>
        <position position="442"/>
    </location>
</feature>
<feature type="modified residue" description="Phosphotyrosine" evidence="2">
    <location>
        <position position="445"/>
    </location>
</feature>
<proteinExistence type="evidence at transcript level"/>
<protein>
    <recommendedName>
        <fullName evidence="3">Eukaryotic translation initiation factor 3 subunit E</fullName>
        <shortName evidence="3">eIF3e</shortName>
    </recommendedName>
    <alternativeName>
        <fullName evidence="3">Eukaryotic translation initiation factor 3 subunit 6</fullName>
    </alternativeName>
    <alternativeName>
        <fullName evidence="3">eIF-3 p48</fullName>
    </alternativeName>
</protein>
<sequence length="445" mass="52221">MAEYDLTTRIAHFLDRHLVFPLLEFLSVKEIYNEKELLQGKLDLLSDTNMVDFAMDVYKNLYSDDIPHALREKRTTVVAQLKQLQAETEPIVKMFEDPETTRQMQSTRDGRMLFDYLADKHGFRQEYLDTLYRYAKFQYECGNYSGAAEYLYFFRVLVPATDRNALSSLWGKLASEILMQNWDAAMEDLTRLKETIDNNSVSSPLQSLQQRTWLIHWSLFVFFNHPKGRDNIIDLFLYQPQYLNAIQTMCPHILRYLTTAVITNKDVRKRRQVLKDLVKVIQQESYTYKDPITEFVECLYVNFDFDGAQKKLRECESVLVNDFFLVACLEDFIENARLFIFETFCRIHQCISINMLADKLNMTPEEAERWIVNLIRNARLDAKIDSKLGHVVMGNNAVSPYQQVIEKTKSLSFRSQMLAMNIEKKLNQNSRSEAPNWATQDSGFY</sequence>
<accession>Q641X8</accession>
<evidence type="ECO:0000250" key="1">
    <source>
        <dbReference type="UniProtKB" id="P60228"/>
    </source>
</evidence>
<evidence type="ECO:0000250" key="2">
    <source>
        <dbReference type="UniProtKB" id="P60229"/>
    </source>
</evidence>
<evidence type="ECO:0000255" key="3">
    <source>
        <dbReference type="HAMAP-Rule" id="MF_03004"/>
    </source>
</evidence>
<evidence type="ECO:0000255" key="4">
    <source>
        <dbReference type="PROSITE-ProRule" id="PRU01185"/>
    </source>
</evidence>
<dbReference type="EMBL" id="BC082087">
    <property type="protein sequence ID" value="AAH82087.1"/>
    <property type="molecule type" value="mRNA"/>
</dbReference>
<dbReference type="RefSeq" id="NP_001011990.1">
    <property type="nucleotide sequence ID" value="NM_001011990.1"/>
</dbReference>
<dbReference type="RefSeq" id="XP_017458930.1">
    <property type="nucleotide sequence ID" value="XM_017603441.1"/>
</dbReference>
<dbReference type="SMR" id="Q641X8"/>
<dbReference type="BioGRID" id="256362">
    <property type="interactions" value="2"/>
</dbReference>
<dbReference type="FunCoup" id="Q641X8">
    <property type="interactions" value="3800"/>
</dbReference>
<dbReference type="IntAct" id="Q641X8">
    <property type="interactions" value="3"/>
</dbReference>
<dbReference type="STRING" id="10116.ENSRNOP00000029790"/>
<dbReference type="iPTMnet" id="Q641X8"/>
<dbReference type="PhosphoSitePlus" id="Q641X8"/>
<dbReference type="SwissPalm" id="Q641X8"/>
<dbReference type="jPOST" id="Q641X8"/>
<dbReference type="PaxDb" id="10116-ENSRNOP00000029790"/>
<dbReference type="GeneID" id="299872"/>
<dbReference type="KEGG" id="rno:299872"/>
<dbReference type="UCSC" id="RGD:1311521">
    <property type="organism name" value="rat"/>
</dbReference>
<dbReference type="AGR" id="RGD:1311521"/>
<dbReference type="CTD" id="3646"/>
<dbReference type="RGD" id="1311521">
    <property type="gene designation" value="Eif3e"/>
</dbReference>
<dbReference type="VEuPathDB" id="HostDB:ENSRNOG00000027690"/>
<dbReference type="eggNOG" id="KOG2758">
    <property type="taxonomic scope" value="Eukaryota"/>
</dbReference>
<dbReference type="HOGENOM" id="CLU_031132_0_1_1"/>
<dbReference type="InParanoid" id="Q641X8"/>
<dbReference type="OrthoDB" id="7250at9989"/>
<dbReference type="PhylomeDB" id="Q641X8"/>
<dbReference type="TreeFam" id="TF101518"/>
<dbReference type="Reactome" id="R-RNO-156827">
    <property type="pathway name" value="L13a-mediated translational silencing of Ceruloplasmin expression"/>
</dbReference>
<dbReference type="Reactome" id="R-RNO-72649">
    <property type="pathway name" value="Translation initiation complex formation"/>
</dbReference>
<dbReference type="Reactome" id="R-RNO-72689">
    <property type="pathway name" value="Formation of a pool of free 40S subunits"/>
</dbReference>
<dbReference type="Reactome" id="R-RNO-72695">
    <property type="pathway name" value="Formation of the ternary complex, and subsequently, the 43S complex"/>
</dbReference>
<dbReference type="Reactome" id="R-RNO-72702">
    <property type="pathway name" value="Ribosomal scanning and start codon recognition"/>
</dbReference>
<dbReference type="PRO" id="PR:Q641X8"/>
<dbReference type="Proteomes" id="UP000002494">
    <property type="component" value="Chromosome 7"/>
</dbReference>
<dbReference type="Bgee" id="ENSRNOG00000027690">
    <property type="expression patterns" value="Expressed in spleen and 19 other cell types or tissues"/>
</dbReference>
<dbReference type="GO" id="GO:0005737">
    <property type="term" value="C:cytoplasm"/>
    <property type="evidence" value="ECO:0000266"/>
    <property type="project" value="RGD"/>
</dbReference>
<dbReference type="GO" id="GO:0016282">
    <property type="term" value="C:eukaryotic 43S preinitiation complex"/>
    <property type="evidence" value="ECO:0007669"/>
    <property type="project" value="UniProtKB-UniRule"/>
</dbReference>
<dbReference type="GO" id="GO:0033290">
    <property type="term" value="C:eukaryotic 48S preinitiation complex"/>
    <property type="evidence" value="ECO:0007669"/>
    <property type="project" value="UniProtKB-UniRule"/>
</dbReference>
<dbReference type="GO" id="GO:0005852">
    <property type="term" value="C:eukaryotic translation initiation factor 3 complex"/>
    <property type="evidence" value="ECO:0000250"/>
    <property type="project" value="UniProtKB"/>
</dbReference>
<dbReference type="GO" id="GO:0071540">
    <property type="term" value="C:eukaryotic translation initiation factor 3 complex, eIF3e"/>
    <property type="evidence" value="ECO:0007669"/>
    <property type="project" value="UniProtKB-UniRule"/>
</dbReference>
<dbReference type="GO" id="GO:0005634">
    <property type="term" value="C:nucleus"/>
    <property type="evidence" value="ECO:0000266"/>
    <property type="project" value="RGD"/>
</dbReference>
<dbReference type="GO" id="GO:0016605">
    <property type="term" value="C:PML body"/>
    <property type="evidence" value="ECO:0000266"/>
    <property type="project" value="RGD"/>
</dbReference>
<dbReference type="GO" id="GO:0014069">
    <property type="term" value="C:postsynaptic density"/>
    <property type="evidence" value="ECO:0000266"/>
    <property type="project" value="RGD"/>
</dbReference>
<dbReference type="GO" id="GO:0003743">
    <property type="term" value="F:translation initiation factor activity"/>
    <property type="evidence" value="ECO:0007669"/>
    <property type="project" value="UniProtKB-UniRule"/>
</dbReference>
<dbReference type="GO" id="GO:0044325">
    <property type="term" value="F:transmembrane transporter binding"/>
    <property type="evidence" value="ECO:0000353"/>
    <property type="project" value="RGD"/>
</dbReference>
<dbReference type="GO" id="GO:0001732">
    <property type="term" value="P:formation of cytoplasmic translation initiation complex"/>
    <property type="evidence" value="ECO:0007669"/>
    <property type="project" value="UniProtKB-UniRule"/>
</dbReference>
<dbReference type="GO" id="GO:0006874">
    <property type="term" value="P:intracellular calcium ion homeostasis"/>
    <property type="evidence" value="ECO:0000315"/>
    <property type="project" value="RGD"/>
</dbReference>
<dbReference type="GO" id="GO:0000184">
    <property type="term" value="P:nuclear-transcribed mRNA catabolic process, nonsense-mediated decay"/>
    <property type="evidence" value="ECO:0000250"/>
    <property type="project" value="UniProtKB"/>
</dbReference>
<dbReference type="GO" id="GO:0090316">
    <property type="term" value="P:positive regulation of intracellular protein transport"/>
    <property type="evidence" value="ECO:0000315"/>
    <property type="project" value="RGD"/>
</dbReference>
<dbReference type="GO" id="GO:0045727">
    <property type="term" value="P:positive regulation of translation"/>
    <property type="evidence" value="ECO:0000266"/>
    <property type="project" value="RGD"/>
</dbReference>
<dbReference type="GO" id="GO:0006413">
    <property type="term" value="P:translational initiation"/>
    <property type="evidence" value="ECO:0000250"/>
    <property type="project" value="UniProtKB"/>
</dbReference>
<dbReference type="CDD" id="cd21378">
    <property type="entry name" value="eIF3E"/>
    <property type="match status" value="1"/>
</dbReference>
<dbReference type="HAMAP" id="MF_03004">
    <property type="entry name" value="eIF3e"/>
    <property type="match status" value="1"/>
</dbReference>
<dbReference type="InterPro" id="IPR016650">
    <property type="entry name" value="eIF3e"/>
</dbReference>
<dbReference type="InterPro" id="IPR019010">
    <property type="entry name" value="eIF3e_N"/>
</dbReference>
<dbReference type="InterPro" id="IPR000717">
    <property type="entry name" value="PCI_dom"/>
</dbReference>
<dbReference type="InterPro" id="IPR036390">
    <property type="entry name" value="WH_DNA-bd_sf"/>
</dbReference>
<dbReference type="PANTHER" id="PTHR10317">
    <property type="entry name" value="EUKARYOTIC TRANSLATION INITIATION FACTOR 3 SUBUNIT E"/>
    <property type="match status" value="1"/>
</dbReference>
<dbReference type="Pfam" id="PF09440">
    <property type="entry name" value="eIF3_N"/>
    <property type="match status" value="1"/>
</dbReference>
<dbReference type="Pfam" id="PF21357">
    <property type="entry name" value="EIF3E_C"/>
    <property type="match status" value="1"/>
</dbReference>
<dbReference type="Pfam" id="PF01399">
    <property type="entry name" value="PCI"/>
    <property type="match status" value="1"/>
</dbReference>
<dbReference type="PIRSF" id="PIRSF016255">
    <property type="entry name" value="eIF3e_su6"/>
    <property type="match status" value="1"/>
</dbReference>
<dbReference type="SMART" id="SM01186">
    <property type="entry name" value="eIF3_N"/>
    <property type="match status" value="1"/>
</dbReference>
<dbReference type="SMART" id="SM00088">
    <property type="entry name" value="PINT"/>
    <property type="match status" value="1"/>
</dbReference>
<dbReference type="SUPFAM" id="SSF46785">
    <property type="entry name" value="Winged helix' DNA-binding domain"/>
    <property type="match status" value="1"/>
</dbReference>
<dbReference type="PROSITE" id="PS50250">
    <property type="entry name" value="PCI"/>
    <property type="match status" value="1"/>
</dbReference>